<accession>Q75DZ2</accession>
<name>AEP2_EREGS</name>
<reference key="1">
    <citation type="journal article" date="2004" name="Science">
        <title>The Ashbya gossypii genome as a tool for mapping the ancient Saccharomyces cerevisiae genome.</title>
        <authorList>
            <person name="Dietrich F.S."/>
            <person name="Voegeli S."/>
            <person name="Brachat S."/>
            <person name="Lerch A."/>
            <person name="Gates K."/>
            <person name="Steiner S."/>
            <person name="Mohr C."/>
            <person name="Poehlmann R."/>
            <person name="Luedi P."/>
            <person name="Choi S."/>
            <person name="Wing R.A."/>
            <person name="Flavier A."/>
            <person name="Gaffney T.D."/>
            <person name="Philippsen P."/>
        </authorList>
    </citation>
    <scope>NUCLEOTIDE SEQUENCE [LARGE SCALE GENOMIC DNA]</scope>
    <source>
        <strain>ATCC 10895 / CBS 109.51 / FGSC 9923 / NRRL Y-1056</strain>
    </source>
</reference>
<reference key="2">
    <citation type="journal article" date="2013" name="G3 (Bethesda)">
        <title>Genomes of Ashbya fungi isolated from insects reveal four mating-type loci, numerous translocations, lack of transposons, and distinct gene duplications.</title>
        <authorList>
            <person name="Dietrich F.S."/>
            <person name="Voegeli S."/>
            <person name="Kuo S."/>
            <person name="Philippsen P."/>
        </authorList>
    </citation>
    <scope>GENOME REANNOTATION</scope>
    <source>
        <strain>ATCC 10895 / CBS 109.51 / FGSC 9923 / NRRL Y-1056</strain>
    </source>
</reference>
<dbReference type="EMBL" id="AE016815">
    <property type="protein sequence ID" value="AAS50652.2"/>
    <property type="molecule type" value="Genomic_DNA"/>
</dbReference>
<dbReference type="RefSeq" id="NP_982828.2">
    <property type="nucleotide sequence ID" value="NM_208181.2"/>
</dbReference>
<dbReference type="EnsemblFungi" id="AAS50652">
    <property type="protein sequence ID" value="AAS50652"/>
    <property type="gene ID" value="AGOS_ABL119C"/>
</dbReference>
<dbReference type="GeneID" id="4618908"/>
<dbReference type="KEGG" id="ago:AGOS_ABL119C"/>
<dbReference type="eggNOG" id="ENOG502SYVV">
    <property type="taxonomic scope" value="Eukaryota"/>
</dbReference>
<dbReference type="HOGENOM" id="CLU_507097_0_0_1"/>
<dbReference type="InParanoid" id="Q75DZ2"/>
<dbReference type="OMA" id="LQLRCGA"/>
<dbReference type="OrthoDB" id="10327283at2759"/>
<dbReference type="Proteomes" id="UP000000591">
    <property type="component" value="Chromosome II"/>
</dbReference>
<dbReference type="GO" id="GO:0005739">
    <property type="term" value="C:mitochondrion"/>
    <property type="evidence" value="ECO:0007669"/>
    <property type="project" value="UniProtKB-SubCell"/>
</dbReference>
<dbReference type="GO" id="GO:0003723">
    <property type="term" value="F:RNA binding"/>
    <property type="evidence" value="ECO:0007669"/>
    <property type="project" value="UniProtKB-KW"/>
</dbReference>
<dbReference type="GO" id="GO:0006417">
    <property type="term" value="P:regulation of translation"/>
    <property type="evidence" value="ECO:0007669"/>
    <property type="project" value="UniProtKB-KW"/>
</dbReference>
<feature type="transit peptide" description="Mitochondrion" evidence="2">
    <location>
        <begin position="1"/>
        <end status="unknown"/>
    </location>
</feature>
<feature type="chain" id="PRO_0000405629" description="ATPase expression protein 2, mitochondrial">
    <location>
        <begin status="unknown"/>
        <end position="537"/>
    </location>
</feature>
<protein>
    <recommendedName>
        <fullName>ATPase expression protein 2, mitochondrial</fullName>
    </recommendedName>
</protein>
<sequence>MMVDFSPSRRRMGTQELSLKPQVETPGIKLLAVMFCRYHLIRQLKQVQAASRTRYAHSVPQSRPTLKERLAALHEKQQLSLLPPDAVKRVSENNPAVLIDCDARTLLQLFLAALQTDPQKTTLSELLSQEEGFSVFIHRLLPTYTPSSDLKHLVSKDGTTALLQKLYGFYREQFADAPIGRPSPGRLHDANSFARWFMAESKLRLARTVFAELVGNPTELAKLPRDTETIITLLQLHLGAKHIFWRDPGNSVGRGGQLFTPAHMAVVTAYNSLGEETLLRLLRLLQSDPQWKSVCSPDLDRNIILALAFHNRLDLVHAQAARYYAPAAPGHGLPSTPLLPDGALVGAVVTAFAFKHQLAQGLAIAYQFLDRFTHLPNEHELWKIIFTWLARRHPTGSQGAALYDEAWSKMRTRYAEHGQPTPYDYSIARASYRIVRRDSSLRRVRALLNDYMSPLYQQPAVAPRDRLLLLKCQAHIVGRLVRARRNSAAADFVDQWALDSEARSHLLEHIAARASSRTDADDDDAGDGLYLTGAPLW</sequence>
<evidence type="ECO:0000250" key="1"/>
<evidence type="ECO:0000255" key="2"/>
<evidence type="ECO:0000305" key="3"/>
<proteinExistence type="inferred from homology"/>
<keyword id="KW-0496">Mitochondrion</keyword>
<keyword id="KW-1185">Reference proteome</keyword>
<keyword id="KW-0694">RNA-binding</keyword>
<keyword id="KW-0809">Transit peptide</keyword>
<keyword id="KW-0810">Translation regulation</keyword>
<gene>
    <name type="primary">AEP2</name>
    <name type="ordered locus">ABL119C</name>
</gene>
<organism>
    <name type="scientific">Eremothecium gossypii (strain ATCC 10895 / CBS 109.51 / FGSC 9923 / NRRL Y-1056)</name>
    <name type="common">Yeast</name>
    <name type="synonym">Ashbya gossypii</name>
    <dbReference type="NCBI Taxonomy" id="284811"/>
    <lineage>
        <taxon>Eukaryota</taxon>
        <taxon>Fungi</taxon>
        <taxon>Dikarya</taxon>
        <taxon>Ascomycota</taxon>
        <taxon>Saccharomycotina</taxon>
        <taxon>Saccharomycetes</taxon>
        <taxon>Saccharomycetales</taxon>
        <taxon>Saccharomycetaceae</taxon>
        <taxon>Eremothecium</taxon>
    </lineage>
</organism>
<comment type="function">
    <text evidence="1">Required for translation of the mitochondrial OLI1 transcript coding for the mitochondrial ATP synthase subunit 9.</text>
</comment>
<comment type="subunit">
    <text evidence="1">Binds to the 5'UTR of the OLI1 mRNA.</text>
</comment>
<comment type="subcellular location">
    <subcellularLocation>
        <location evidence="1">Mitochondrion</location>
    </subcellularLocation>
</comment>
<comment type="similarity">
    <text evidence="3">Belongs to the AEP2 family.</text>
</comment>